<reference key="1">
    <citation type="journal article" date="2000" name="Science">
        <title>Complete genome sequence of Neisseria meningitidis serogroup B strain MC58.</title>
        <authorList>
            <person name="Tettelin H."/>
            <person name="Saunders N.J."/>
            <person name="Heidelberg J.F."/>
            <person name="Jeffries A.C."/>
            <person name="Nelson K.E."/>
            <person name="Eisen J.A."/>
            <person name="Ketchum K.A."/>
            <person name="Hood D.W."/>
            <person name="Peden J.F."/>
            <person name="Dodson R.J."/>
            <person name="Nelson W.C."/>
            <person name="Gwinn M.L."/>
            <person name="DeBoy R.T."/>
            <person name="Peterson J.D."/>
            <person name="Hickey E.K."/>
            <person name="Haft D.H."/>
            <person name="Salzberg S.L."/>
            <person name="White O."/>
            <person name="Fleischmann R.D."/>
            <person name="Dougherty B.A."/>
            <person name="Mason T.M."/>
            <person name="Ciecko A."/>
            <person name="Parksey D.S."/>
            <person name="Blair E."/>
            <person name="Cittone H."/>
            <person name="Clark E.B."/>
            <person name="Cotton M.D."/>
            <person name="Utterback T.R."/>
            <person name="Khouri H.M."/>
            <person name="Qin H."/>
            <person name="Vamathevan J.J."/>
            <person name="Gill J."/>
            <person name="Scarlato V."/>
            <person name="Masignani V."/>
            <person name="Pizza M."/>
            <person name="Grandi G."/>
            <person name="Sun L."/>
            <person name="Smith H.O."/>
            <person name="Fraser C.M."/>
            <person name="Moxon E.R."/>
            <person name="Rappuoli R."/>
            <person name="Venter J.C."/>
        </authorList>
    </citation>
    <scope>NUCLEOTIDE SEQUENCE [LARGE SCALE GENOMIC DNA]</scope>
    <source>
        <strain>ATCC BAA-335 / MC58</strain>
    </source>
</reference>
<organism>
    <name type="scientific">Neisseria meningitidis serogroup B (strain ATCC BAA-335 / MC58)</name>
    <dbReference type="NCBI Taxonomy" id="122586"/>
    <lineage>
        <taxon>Bacteria</taxon>
        <taxon>Pseudomonadati</taxon>
        <taxon>Pseudomonadota</taxon>
        <taxon>Betaproteobacteria</taxon>
        <taxon>Neisseriales</taxon>
        <taxon>Neisseriaceae</taxon>
        <taxon>Neisseria</taxon>
    </lineage>
</organism>
<accession>Q7DDN1</accession>
<sequence>MSDESPIIFTDSCCAKVADLIAEENNPDLKLRVFVNGGGCSGFQYGFTFDEIKNDDDFEIEKNGLVFLVDPMSYQYLVGAEIDYTESLQGSQFVIRNPNAETTCGCGSSFSV</sequence>
<evidence type="ECO:0000255" key="1">
    <source>
        <dbReference type="HAMAP-Rule" id="MF_01380"/>
    </source>
</evidence>
<proteinExistence type="inferred from homology"/>
<dbReference type="EMBL" id="AE002098">
    <property type="protein sequence ID" value="AAF40985.1"/>
    <property type="molecule type" value="Genomic_DNA"/>
</dbReference>
<dbReference type="PIR" id="H81183">
    <property type="entry name" value="H81183"/>
</dbReference>
<dbReference type="RefSeq" id="NP_273601.1">
    <property type="nucleotide sequence ID" value="NC_003112.2"/>
</dbReference>
<dbReference type="RefSeq" id="WP_002219692.1">
    <property type="nucleotide sequence ID" value="NC_003112.2"/>
</dbReference>
<dbReference type="SMR" id="Q7DDN1"/>
<dbReference type="FunCoup" id="Q7DDN1">
    <property type="interactions" value="406"/>
</dbReference>
<dbReference type="STRING" id="122586.NMB0557"/>
<dbReference type="PaxDb" id="122586-NMB0557"/>
<dbReference type="GeneID" id="93386629"/>
<dbReference type="KEGG" id="nme:NMB0557"/>
<dbReference type="PATRIC" id="fig|122586.8.peg.712"/>
<dbReference type="HOGENOM" id="CLU_069054_5_3_4"/>
<dbReference type="InParanoid" id="Q7DDN1"/>
<dbReference type="OrthoDB" id="9801228at2"/>
<dbReference type="Proteomes" id="UP000000425">
    <property type="component" value="Chromosome"/>
</dbReference>
<dbReference type="GO" id="GO:0051537">
    <property type="term" value="F:2 iron, 2 sulfur cluster binding"/>
    <property type="evidence" value="ECO:0000318"/>
    <property type="project" value="GO_Central"/>
</dbReference>
<dbReference type="GO" id="GO:0051539">
    <property type="term" value="F:4 iron, 4 sulfur cluster binding"/>
    <property type="evidence" value="ECO:0000318"/>
    <property type="project" value="GO_Central"/>
</dbReference>
<dbReference type="GO" id="GO:0005506">
    <property type="term" value="F:iron ion binding"/>
    <property type="evidence" value="ECO:0000318"/>
    <property type="project" value="GO_Central"/>
</dbReference>
<dbReference type="GO" id="GO:0016226">
    <property type="term" value="P:iron-sulfur cluster assembly"/>
    <property type="evidence" value="ECO:0000318"/>
    <property type="project" value="GO_Central"/>
</dbReference>
<dbReference type="FunFam" id="2.60.300.12:FF:000002">
    <property type="entry name" value="Iron-sulfur cluster insertion protein ErpA"/>
    <property type="match status" value="1"/>
</dbReference>
<dbReference type="Gene3D" id="2.60.300.12">
    <property type="entry name" value="HesB-like domain"/>
    <property type="match status" value="1"/>
</dbReference>
<dbReference type="HAMAP" id="MF_01380">
    <property type="entry name" value="Fe_S_insert_ErpA"/>
    <property type="match status" value="1"/>
</dbReference>
<dbReference type="InterPro" id="IPR000361">
    <property type="entry name" value="FeS_biogenesis"/>
</dbReference>
<dbReference type="InterPro" id="IPR016092">
    <property type="entry name" value="FeS_cluster_insertion"/>
</dbReference>
<dbReference type="InterPro" id="IPR017870">
    <property type="entry name" value="FeS_cluster_insertion_CS"/>
</dbReference>
<dbReference type="InterPro" id="IPR023063">
    <property type="entry name" value="FeS_cluster_insertion_RrpA"/>
</dbReference>
<dbReference type="InterPro" id="IPR035903">
    <property type="entry name" value="HesB-like_dom_sf"/>
</dbReference>
<dbReference type="NCBIfam" id="TIGR00049">
    <property type="entry name" value="iron-sulfur cluster assembly accessory protein"/>
    <property type="match status" value="1"/>
</dbReference>
<dbReference type="NCBIfam" id="NF010147">
    <property type="entry name" value="PRK13623.1"/>
    <property type="match status" value="1"/>
</dbReference>
<dbReference type="PANTHER" id="PTHR43011">
    <property type="entry name" value="IRON-SULFUR CLUSTER ASSEMBLY 2 HOMOLOG, MITOCHONDRIAL"/>
    <property type="match status" value="1"/>
</dbReference>
<dbReference type="PANTHER" id="PTHR43011:SF1">
    <property type="entry name" value="IRON-SULFUR CLUSTER ASSEMBLY 2 HOMOLOG, MITOCHONDRIAL"/>
    <property type="match status" value="1"/>
</dbReference>
<dbReference type="Pfam" id="PF01521">
    <property type="entry name" value="Fe-S_biosyn"/>
    <property type="match status" value="1"/>
</dbReference>
<dbReference type="SUPFAM" id="SSF89360">
    <property type="entry name" value="HesB-like domain"/>
    <property type="match status" value="1"/>
</dbReference>
<dbReference type="PROSITE" id="PS01152">
    <property type="entry name" value="HESB"/>
    <property type="match status" value="1"/>
</dbReference>
<keyword id="KW-0408">Iron</keyword>
<keyword id="KW-0411">Iron-sulfur</keyword>
<keyword id="KW-0479">Metal-binding</keyword>
<keyword id="KW-1185">Reference proteome</keyword>
<protein>
    <recommendedName>
        <fullName evidence="1">Putative iron-sulfur cluster insertion protein ErpA</fullName>
    </recommendedName>
</protein>
<name>ERPA_NEIMB</name>
<gene>
    <name evidence="1" type="primary">erpA</name>
    <name type="ordered locus">NMB0557</name>
</gene>
<feature type="chain" id="PRO_0000311509" description="Putative iron-sulfur cluster insertion protein ErpA">
    <location>
        <begin position="1"/>
        <end position="112"/>
    </location>
</feature>
<feature type="binding site" evidence="1">
    <location>
        <position position="40"/>
    </location>
    <ligand>
        <name>iron-sulfur cluster</name>
        <dbReference type="ChEBI" id="CHEBI:30408"/>
    </ligand>
</feature>
<feature type="binding site" evidence="1">
    <location>
        <position position="104"/>
    </location>
    <ligand>
        <name>iron-sulfur cluster</name>
        <dbReference type="ChEBI" id="CHEBI:30408"/>
    </ligand>
</feature>
<feature type="binding site" evidence="1">
    <location>
        <position position="106"/>
    </location>
    <ligand>
        <name>iron-sulfur cluster</name>
        <dbReference type="ChEBI" id="CHEBI:30408"/>
    </ligand>
</feature>
<comment type="function">
    <text evidence="1">Required for insertion of 4Fe-4S clusters.</text>
</comment>
<comment type="cofactor">
    <cofactor evidence="1">
        <name>iron-sulfur cluster</name>
        <dbReference type="ChEBI" id="CHEBI:30408"/>
    </cofactor>
    <text evidence="1">Binds 1 iron-sulfur cluster per subunit.</text>
</comment>
<comment type="subunit">
    <text evidence="1">Homodimer.</text>
</comment>
<comment type="similarity">
    <text evidence="1">Belongs to the HesB/IscA family.</text>
</comment>